<name>ATPG_DEHMB</name>
<sequence>MANLRIIKRRIRSVRNIAKITRAMEMIAASKMKKAQERGLAGRPYSEKITEVIAALAALPQSGEILHPLLERRPVKKIAILHITPDRGQCGGLVANINRKTGTFIMEQKVSVSAVVVGRKGVDFIRRIRQQMRAEFINLGDKPDYLDTLPISRVIMDDFMSGEIDQVFIAYTQFVSTAIQNPVLEQLLPVVPVEFPPGQNLEYIYEPESAAVLNSLLPRFVEMSVYHAILESIASEQSARMVAMRNATDNAKELIGELTLVYNKARQESITNELLDIVGGAAALA</sequence>
<dbReference type="EMBL" id="CP000688">
    <property type="protein sequence ID" value="ABQ17122.1"/>
    <property type="molecule type" value="Genomic_DNA"/>
</dbReference>
<dbReference type="SMR" id="A5FRQ4"/>
<dbReference type="KEGG" id="deb:DehaBAV1_0537"/>
<dbReference type="PATRIC" id="fig|216389.18.peg.582"/>
<dbReference type="HOGENOM" id="CLU_050669_0_1_0"/>
<dbReference type="GO" id="GO:0005886">
    <property type="term" value="C:plasma membrane"/>
    <property type="evidence" value="ECO:0007669"/>
    <property type="project" value="UniProtKB-SubCell"/>
</dbReference>
<dbReference type="GO" id="GO:0045259">
    <property type="term" value="C:proton-transporting ATP synthase complex"/>
    <property type="evidence" value="ECO:0007669"/>
    <property type="project" value="UniProtKB-KW"/>
</dbReference>
<dbReference type="GO" id="GO:0005524">
    <property type="term" value="F:ATP binding"/>
    <property type="evidence" value="ECO:0007669"/>
    <property type="project" value="UniProtKB-UniRule"/>
</dbReference>
<dbReference type="GO" id="GO:0046933">
    <property type="term" value="F:proton-transporting ATP synthase activity, rotational mechanism"/>
    <property type="evidence" value="ECO:0007669"/>
    <property type="project" value="UniProtKB-UniRule"/>
</dbReference>
<dbReference type="GO" id="GO:0042777">
    <property type="term" value="P:proton motive force-driven plasma membrane ATP synthesis"/>
    <property type="evidence" value="ECO:0007669"/>
    <property type="project" value="UniProtKB-UniRule"/>
</dbReference>
<dbReference type="CDD" id="cd12151">
    <property type="entry name" value="F1-ATPase_gamma"/>
    <property type="match status" value="1"/>
</dbReference>
<dbReference type="Gene3D" id="3.40.1380.10">
    <property type="match status" value="1"/>
</dbReference>
<dbReference type="Gene3D" id="1.10.287.80">
    <property type="entry name" value="ATP synthase, gamma subunit, helix hairpin domain"/>
    <property type="match status" value="2"/>
</dbReference>
<dbReference type="HAMAP" id="MF_00815">
    <property type="entry name" value="ATP_synth_gamma_bact"/>
    <property type="match status" value="1"/>
</dbReference>
<dbReference type="InterPro" id="IPR035968">
    <property type="entry name" value="ATP_synth_F1_ATPase_gsu"/>
</dbReference>
<dbReference type="InterPro" id="IPR000131">
    <property type="entry name" value="ATP_synth_F1_gsu"/>
</dbReference>
<dbReference type="InterPro" id="IPR023632">
    <property type="entry name" value="ATP_synth_F1_gsu_CS"/>
</dbReference>
<dbReference type="NCBIfam" id="TIGR01146">
    <property type="entry name" value="ATPsyn_F1gamma"/>
    <property type="match status" value="1"/>
</dbReference>
<dbReference type="PANTHER" id="PTHR11693">
    <property type="entry name" value="ATP SYNTHASE GAMMA CHAIN"/>
    <property type="match status" value="1"/>
</dbReference>
<dbReference type="PANTHER" id="PTHR11693:SF22">
    <property type="entry name" value="ATP SYNTHASE SUBUNIT GAMMA, MITOCHONDRIAL"/>
    <property type="match status" value="1"/>
</dbReference>
<dbReference type="Pfam" id="PF00231">
    <property type="entry name" value="ATP-synt"/>
    <property type="match status" value="1"/>
</dbReference>
<dbReference type="PRINTS" id="PR00126">
    <property type="entry name" value="ATPASEGAMMA"/>
</dbReference>
<dbReference type="SUPFAM" id="SSF52943">
    <property type="entry name" value="ATP synthase (F1-ATPase), gamma subunit"/>
    <property type="match status" value="1"/>
</dbReference>
<dbReference type="PROSITE" id="PS00153">
    <property type="entry name" value="ATPASE_GAMMA"/>
    <property type="match status" value="1"/>
</dbReference>
<keyword id="KW-0066">ATP synthesis</keyword>
<keyword id="KW-1003">Cell membrane</keyword>
<keyword id="KW-0139">CF(1)</keyword>
<keyword id="KW-0375">Hydrogen ion transport</keyword>
<keyword id="KW-0406">Ion transport</keyword>
<keyword id="KW-0472">Membrane</keyword>
<keyword id="KW-0813">Transport</keyword>
<accession>A5FRQ4</accession>
<comment type="function">
    <text evidence="1">Produces ATP from ADP in the presence of a proton gradient across the membrane. The gamma chain is believed to be important in regulating ATPase activity and the flow of protons through the CF(0) complex.</text>
</comment>
<comment type="subunit">
    <text evidence="1">F-type ATPases have 2 components, CF(1) - the catalytic core - and CF(0) - the membrane proton channel. CF(1) has five subunits: alpha(3), beta(3), gamma(1), delta(1), epsilon(1). CF(0) has three main subunits: a, b and c.</text>
</comment>
<comment type="subcellular location">
    <subcellularLocation>
        <location evidence="1">Cell membrane</location>
        <topology evidence="1">Peripheral membrane protein</topology>
    </subcellularLocation>
</comment>
<comment type="similarity">
    <text evidence="1">Belongs to the ATPase gamma chain family.</text>
</comment>
<proteinExistence type="inferred from homology"/>
<gene>
    <name evidence="1" type="primary">atpG</name>
    <name type="ordered locus">DehaBAV1_0537</name>
</gene>
<protein>
    <recommendedName>
        <fullName evidence="1">ATP synthase gamma chain</fullName>
    </recommendedName>
    <alternativeName>
        <fullName evidence="1">ATP synthase F1 sector gamma subunit</fullName>
    </alternativeName>
    <alternativeName>
        <fullName evidence="1">F-ATPase gamma subunit</fullName>
    </alternativeName>
</protein>
<reference key="1">
    <citation type="submission" date="2007-05" db="EMBL/GenBank/DDBJ databases">
        <title>Complete sequence of Dehalococcoides sp. BAV1.</title>
        <authorList>
            <consortium name="US DOE Joint Genome Institute"/>
            <person name="Copeland A."/>
            <person name="Lucas S."/>
            <person name="Lapidus A."/>
            <person name="Barry K."/>
            <person name="Detter J.C."/>
            <person name="Glavina del Rio T."/>
            <person name="Hammon N."/>
            <person name="Israni S."/>
            <person name="Pitluck S."/>
            <person name="Lowry S."/>
            <person name="Clum A."/>
            <person name="Schmutz J."/>
            <person name="Larimer F."/>
            <person name="Land M."/>
            <person name="Hauser L."/>
            <person name="Kyrpides N."/>
            <person name="Kim E."/>
            <person name="Ritalahti K.M."/>
            <person name="Loeffler F."/>
            <person name="Richardson P."/>
        </authorList>
    </citation>
    <scope>NUCLEOTIDE SEQUENCE [LARGE SCALE GENOMIC DNA]</scope>
    <source>
        <strain>ATCC BAA-2100 / JCM 16839 / KCTC 5957 / BAV1</strain>
    </source>
</reference>
<evidence type="ECO:0000255" key="1">
    <source>
        <dbReference type="HAMAP-Rule" id="MF_00815"/>
    </source>
</evidence>
<organism>
    <name type="scientific">Dehalococcoides mccartyi (strain ATCC BAA-2100 / JCM 16839 / KCTC 5957 / BAV1)</name>
    <dbReference type="NCBI Taxonomy" id="216389"/>
    <lineage>
        <taxon>Bacteria</taxon>
        <taxon>Bacillati</taxon>
        <taxon>Chloroflexota</taxon>
        <taxon>Dehalococcoidia</taxon>
        <taxon>Dehalococcoidales</taxon>
        <taxon>Dehalococcoidaceae</taxon>
        <taxon>Dehalococcoides</taxon>
    </lineage>
</organism>
<feature type="chain" id="PRO_1000083783" description="ATP synthase gamma chain">
    <location>
        <begin position="1"/>
        <end position="285"/>
    </location>
</feature>